<proteinExistence type="evidence at protein level"/>
<gene>
    <name type="primary">Rpl10a</name>
    <name type="synonym">Nedd-6</name>
    <name type="synonym">Nedd6</name>
</gene>
<comment type="function">
    <text evidence="1">Component of the large ribosomal subunit. The ribosome is a large ribonucleoprotein complex responsible for the synthesis of proteins in the cell.</text>
</comment>
<comment type="subunit">
    <text evidence="1">Component of the large ribosomal subunit.</text>
</comment>
<comment type="subcellular location">
    <subcellularLocation>
        <location evidence="1">Cytoplasm</location>
    </subcellularLocation>
</comment>
<comment type="similarity">
    <text evidence="2">Belongs to the universal ribosomal protein uL1 family.</text>
</comment>
<comment type="sequence caution" evidence="2">
    <conflict type="frameshift">
        <sequence resource="EMBL" id="D10916"/>
    </conflict>
</comment>
<name>RL10A_MOUSE</name>
<dbReference type="EMBL" id="U12403">
    <property type="protein sequence ID" value="AAA86464.1"/>
    <property type="molecule type" value="mRNA"/>
</dbReference>
<dbReference type="EMBL" id="D10916">
    <property type="status" value="NOT_ANNOTATED_CDS"/>
    <property type="molecule type" value="mRNA"/>
</dbReference>
<dbReference type="PDB" id="7LS1">
    <property type="method" value="EM"/>
    <property type="resolution" value="3.30 A"/>
    <property type="chains" value="L1=1-217"/>
</dbReference>
<dbReference type="PDB" id="7LS2">
    <property type="method" value="EM"/>
    <property type="resolution" value="3.10 A"/>
    <property type="chains" value="L1=1-217"/>
</dbReference>
<dbReference type="PDBsum" id="7LS1"/>
<dbReference type="PDBsum" id="7LS2"/>
<dbReference type="EMDB" id="EMD-23500"/>
<dbReference type="EMDB" id="EMD-23501"/>
<dbReference type="SMR" id="P53026"/>
<dbReference type="ComplexPortal" id="CPX-5262">
    <property type="entry name" value="60S cytosolic large ribosomal subunit"/>
</dbReference>
<dbReference type="ComplexPortal" id="CPX-7662">
    <property type="entry name" value="60S cytosolic large ribosomal subunit, testis-specific variant"/>
</dbReference>
<dbReference type="ComplexPortal" id="CPX-7663">
    <property type="entry name" value="60S cytosolic large ribosomal subunit, striated muscle variant"/>
</dbReference>
<dbReference type="FunCoup" id="P53026">
    <property type="interactions" value="2074"/>
</dbReference>
<dbReference type="IntAct" id="P53026">
    <property type="interactions" value="4"/>
</dbReference>
<dbReference type="MINT" id="P53026"/>
<dbReference type="STRING" id="10090.ENSMUSP00000048469"/>
<dbReference type="GlyGen" id="P53026">
    <property type="glycosylation" value="1 site, 1 O-linked glycan (1 site)"/>
</dbReference>
<dbReference type="iPTMnet" id="P53026"/>
<dbReference type="PhosphoSitePlus" id="P53026"/>
<dbReference type="SwissPalm" id="P53026"/>
<dbReference type="CPTAC" id="non-CPTAC-3742"/>
<dbReference type="jPOST" id="P53026"/>
<dbReference type="PaxDb" id="10090-ENSMUSP00000048469"/>
<dbReference type="PeptideAtlas" id="P53026"/>
<dbReference type="ProteomicsDB" id="255016"/>
<dbReference type="Pumba" id="P53026"/>
<dbReference type="TopDownProteomics" id="P53026"/>
<dbReference type="AGR" id="MGI:1343877"/>
<dbReference type="MGI" id="MGI:1343877">
    <property type="gene designation" value="Rpl10a"/>
</dbReference>
<dbReference type="eggNOG" id="KOG1570">
    <property type="taxonomic scope" value="Eukaryota"/>
</dbReference>
<dbReference type="InParanoid" id="P53026"/>
<dbReference type="PhylomeDB" id="P53026"/>
<dbReference type="Reactome" id="R-MMU-156827">
    <property type="pathway name" value="L13a-mediated translational silencing of Ceruloplasmin expression"/>
</dbReference>
<dbReference type="Reactome" id="R-MMU-1799339">
    <property type="pathway name" value="SRP-dependent cotranslational protein targeting to membrane"/>
</dbReference>
<dbReference type="Reactome" id="R-MMU-6791226">
    <property type="pathway name" value="Major pathway of rRNA processing in the nucleolus and cytosol"/>
</dbReference>
<dbReference type="Reactome" id="R-MMU-72689">
    <property type="pathway name" value="Formation of a pool of free 40S subunits"/>
</dbReference>
<dbReference type="Reactome" id="R-MMU-72706">
    <property type="pathway name" value="GTP hydrolysis and joining of the 60S ribosomal subunit"/>
</dbReference>
<dbReference type="Reactome" id="R-MMU-975956">
    <property type="pathway name" value="Nonsense Mediated Decay (NMD) independent of the Exon Junction Complex (EJC)"/>
</dbReference>
<dbReference type="Reactome" id="R-MMU-975957">
    <property type="pathway name" value="Nonsense Mediated Decay (NMD) enhanced by the Exon Junction Complex (EJC)"/>
</dbReference>
<dbReference type="CD-CODE" id="CE726F99">
    <property type="entry name" value="Postsynaptic density"/>
</dbReference>
<dbReference type="ChiTaRS" id="Rpl10a">
    <property type="organism name" value="mouse"/>
</dbReference>
<dbReference type="PRO" id="PR:P53026"/>
<dbReference type="Proteomes" id="UP000000589">
    <property type="component" value="Unplaced"/>
</dbReference>
<dbReference type="RNAct" id="P53026">
    <property type="molecule type" value="protein"/>
</dbReference>
<dbReference type="GO" id="GO:0005737">
    <property type="term" value="C:cytoplasm"/>
    <property type="evidence" value="ECO:0000314"/>
    <property type="project" value="ComplexPortal"/>
</dbReference>
<dbReference type="GO" id="GO:0005829">
    <property type="term" value="C:cytosol"/>
    <property type="evidence" value="ECO:0000304"/>
    <property type="project" value="Reactome"/>
</dbReference>
<dbReference type="GO" id="GO:0022625">
    <property type="term" value="C:cytosolic large ribosomal subunit"/>
    <property type="evidence" value="ECO:0000353"/>
    <property type="project" value="ComplexPortal"/>
</dbReference>
<dbReference type="GO" id="GO:0005739">
    <property type="term" value="C:mitochondrion"/>
    <property type="evidence" value="ECO:0007005"/>
    <property type="project" value="MGI"/>
</dbReference>
<dbReference type="GO" id="GO:0098794">
    <property type="term" value="C:postsynapse"/>
    <property type="evidence" value="ECO:0000303"/>
    <property type="project" value="SynGO"/>
</dbReference>
<dbReference type="GO" id="GO:0098793">
    <property type="term" value="C:presynapse"/>
    <property type="evidence" value="ECO:0000303"/>
    <property type="project" value="SynGO"/>
</dbReference>
<dbReference type="GO" id="GO:0005840">
    <property type="term" value="C:ribosome"/>
    <property type="evidence" value="ECO:0000303"/>
    <property type="project" value="SynGO"/>
</dbReference>
<dbReference type="GO" id="GO:0045202">
    <property type="term" value="C:synapse"/>
    <property type="evidence" value="ECO:0000314"/>
    <property type="project" value="SynGO"/>
</dbReference>
<dbReference type="GO" id="GO:0003723">
    <property type="term" value="F:RNA binding"/>
    <property type="evidence" value="ECO:0007669"/>
    <property type="project" value="InterPro"/>
</dbReference>
<dbReference type="GO" id="GO:0003735">
    <property type="term" value="F:structural constituent of ribosome"/>
    <property type="evidence" value="ECO:0007669"/>
    <property type="project" value="InterPro"/>
</dbReference>
<dbReference type="GO" id="GO:0002181">
    <property type="term" value="P:cytoplasmic translation"/>
    <property type="evidence" value="ECO:0000303"/>
    <property type="project" value="ComplexPortal"/>
</dbReference>
<dbReference type="GO" id="GO:0140242">
    <property type="term" value="P:translation at postsynapse"/>
    <property type="evidence" value="ECO:0000303"/>
    <property type="project" value="SynGO"/>
</dbReference>
<dbReference type="GO" id="GO:0140236">
    <property type="term" value="P:translation at presynapse"/>
    <property type="evidence" value="ECO:0000303"/>
    <property type="project" value="SynGO"/>
</dbReference>
<dbReference type="CDD" id="cd00403">
    <property type="entry name" value="Ribosomal_L1"/>
    <property type="match status" value="1"/>
</dbReference>
<dbReference type="FunFam" id="3.30.190.20:FF:000006">
    <property type="entry name" value="Ribosomal protein"/>
    <property type="match status" value="1"/>
</dbReference>
<dbReference type="FunFam" id="3.40.50.790:FF:000002">
    <property type="entry name" value="Ribosomal protein"/>
    <property type="match status" value="1"/>
</dbReference>
<dbReference type="FunFam" id="3.30.190.20:FF:000009">
    <property type="entry name" value="Ribosomal protein L10a"/>
    <property type="match status" value="1"/>
</dbReference>
<dbReference type="Gene3D" id="3.30.190.20">
    <property type="match status" value="1"/>
</dbReference>
<dbReference type="Gene3D" id="3.40.50.790">
    <property type="match status" value="1"/>
</dbReference>
<dbReference type="InterPro" id="IPR050257">
    <property type="entry name" value="eL8/uL1-like"/>
</dbReference>
<dbReference type="InterPro" id="IPR002143">
    <property type="entry name" value="Ribosomal_uL1"/>
</dbReference>
<dbReference type="InterPro" id="IPR023674">
    <property type="entry name" value="Ribosomal_uL1-like"/>
</dbReference>
<dbReference type="InterPro" id="IPR028364">
    <property type="entry name" value="Ribosomal_uL1/biogenesis"/>
</dbReference>
<dbReference type="InterPro" id="IPR016095">
    <property type="entry name" value="Ribosomal_uL1_3-a/b-sand"/>
</dbReference>
<dbReference type="InterPro" id="IPR023673">
    <property type="entry name" value="Ribosomal_uL1_CS"/>
</dbReference>
<dbReference type="PANTHER" id="PTHR23105">
    <property type="entry name" value="RIBOSOMAL PROTEIN L7AE FAMILY MEMBER"/>
    <property type="match status" value="1"/>
</dbReference>
<dbReference type="Pfam" id="PF00687">
    <property type="entry name" value="Ribosomal_L1"/>
    <property type="match status" value="1"/>
</dbReference>
<dbReference type="PIRSF" id="PIRSF002155">
    <property type="entry name" value="Ribosomal_L1"/>
    <property type="match status" value="1"/>
</dbReference>
<dbReference type="SUPFAM" id="SSF56808">
    <property type="entry name" value="Ribosomal protein L1"/>
    <property type="match status" value="1"/>
</dbReference>
<dbReference type="PROSITE" id="PS01199">
    <property type="entry name" value="RIBOSOMAL_L1"/>
    <property type="match status" value="1"/>
</dbReference>
<evidence type="ECO:0000250" key="1">
    <source>
        <dbReference type="UniProtKB" id="P62906"/>
    </source>
</evidence>
<evidence type="ECO:0000305" key="2"/>
<evidence type="ECO:0007744" key="3">
    <source>
    </source>
</evidence>
<evidence type="ECO:0007744" key="4">
    <source>
    </source>
</evidence>
<evidence type="ECO:0007744" key="5">
    <source>
    </source>
</evidence>
<protein>
    <recommendedName>
        <fullName evidence="2">Large ribosomal subunit protein uL1</fullName>
    </recommendedName>
    <alternativeName>
        <fullName>60S ribosomal protein L10a</fullName>
    </alternativeName>
    <alternativeName>
        <fullName>CSA-19</fullName>
    </alternativeName>
    <alternativeName>
        <fullName>Neural precursor cell expressed developmentally down-regulated protein 6</fullName>
        <shortName>NEDD-6</shortName>
    </alternativeName>
</protein>
<keyword id="KW-0002">3D-structure</keyword>
<keyword id="KW-0007">Acetylation</keyword>
<keyword id="KW-0963">Cytoplasm</keyword>
<keyword id="KW-1017">Isopeptide bond</keyword>
<keyword id="KW-0597">Phosphoprotein</keyword>
<keyword id="KW-1185">Reference proteome</keyword>
<keyword id="KW-0687">Ribonucleoprotein</keyword>
<keyword id="KW-0689">Ribosomal protein</keyword>
<keyword id="KW-0832">Ubl conjugation</keyword>
<feature type="initiator methionine" description="Removed" evidence="1">
    <location>
        <position position="1"/>
    </location>
</feature>
<feature type="chain" id="PRO_0000125820" description="Large ribosomal subunit protein uL1">
    <location>
        <begin position="2"/>
        <end position="217"/>
    </location>
</feature>
<feature type="modified residue" description="N-acetylserine" evidence="1">
    <location>
        <position position="2"/>
    </location>
</feature>
<feature type="modified residue" description="Phosphotyrosine" evidence="3">
    <location>
        <position position="11"/>
    </location>
</feature>
<feature type="modified residue" description="N6-acetyllysine" evidence="4">
    <location>
        <position position="91"/>
    </location>
</feature>
<feature type="modified residue" description="N6-acetyllysine" evidence="4 5">
    <location>
        <position position="106"/>
    </location>
</feature>
<feature type="modified residue" description="N6-acetyllysine; alternate" evidence="1">
    <location>
        <position position="118"/>
    </location>
</feature>
<feature type="cross-link" description="Glycyl lysine isopeptide (Lys-Gly) (interchain with G-Cter in SUMO1); alternate" evidence="1">
    <location>
        <position position="118"/>
    </location>
</feature>
<feature type="cross-link" description="Glycyl lysine isopeptide (Lys-Gly) (interchain with G-Cter in SUMO2); alternate" evidence="1">
    <location>
        <position position="118"/>
    </location>
</feature>
<feature type="cross-link" description="Glycyl lysine isopeptide (Lys-Gly) (interchain with G-Cter in SUMO2)" evidence="1">
    <location>
        <position position="161"/>
    </location>
</feature>
<organism>
    <name type="scientific">Mus musculus</name>
    <name type="common">Mouse</name>
    <dbReference type="NCBI Taxonomy" id="10090"/>
    <lineage>
        <taxon>Eukaryota</taxon>
        <taxon>Metazoa</taxon>
        <taxon>Chordata</taxon>
        <taxon>Craniata</taxon>
        <taxon>Vertebrata</taxon>
        <taxon>Euteleostomi</taxon>
        <taxon>Mammalia</taxon>
        <taxon>Eutheria</taxon>
        <taxon>Euarchontoglires</taxon>
        <taxon>Glires</taxon>
        <taxon>Rodentia</taxon>
        <taxon>Myomorpha</taxon>
        <taxon>Muroidea</taxon>
        <taxon>Muridae</taxon>
        <taxon>Murinae</taxon>
        <taxon>Mus</taxon>
        <taxon>Mus</taxon>
    </lineage>
</organism>
<reference key="1">
    <citation type="journal article" date="1995" name="Mol. Immunol.">
        <title>Identification of genes downregulated in the thymus by cyclosporin-A: preliminary characterization of clone CSA-19.</title>
        <authorList>
            <person name="Fisicaro N."/>
            <person name="Katerelos M."/>
            <person name="Williams J."/>
            <person name="Power D."/>
            <person name="D'Apice A."/>
            <person name="Pearse M."/>
        </authorList>
    </citation>
    <scope>NUCLEOTIDE SEQUENCE [MRNA]</scope>
</reference>
<reference key="2">
    <citation type="journal article" date="1992" name="Biochem. Biophys. Res. Commun.">
        <title>Identification of a set of genes with developmentally down-regulated expression in the mouse brain.</title>
        <authorList>
            <person name="Kumar S."/>
            <person name="Tomooka Y."/>
            <person name="Noda M."/>
        </authorList>
    </citation>
    <scope>NUCLEOTIDE SEQUENCE [MRNA] OF 92-217</scope>
</reference>
<reference key="3">
    <citation type="journal article" date="2007" name="J. Immunol.">
        <title>Quantitative time-resolved phosphoproteomic analysis of mast cell signaling.</title>
        <authorList>
            <person name="Cao L."/>
            <person name="Yu K."/>
            <person name="Banh C."/>
            <person name="Nguyen V."/>
            <person name="Ritz A."/>
            <person name="Raphael B.J."/>
            <person name="Kawakami Y."/>
            <person name="Kawakami T."/>
            <person name="Salomon A.R."/>
        </authorList>
    </citation>
    <scope>PHOSPHORYLATION [LARGE SCALE ANALYSIS] AT TYR-11</scope>
    <scope>IDENTIFICATION BY MASS SPECTROMETRY [LARGE SCALE ANALYSIS]</scope>
    <source>
        <tissue>Mast cell</tissue>
    </source>
</reference>
<reference key="4">
    <citation type="journal article" date="2010" name="Cell">
        <title>A tissue-specific atlas of mouse protein phosphorylation and expression.</title>
        <authorList>
            <person name="Huttlin E.L."/>
            <person name="Jedrychowski M.P."/>
            <person name="Elias J.E."/>
            <person name="Goswami T."/>
            <person name="Rad R."/>
            <person name="Beausoleil S.A."/>
            <person name="Villen J."/>
            <person name="Haas W."/>
            <person name="Sowa M.E."/>
            <person name="Gygi S.P."/>
        </authorList>
    </citation>
    <scope>IDENTIFICATION BY MASS SPECTROMETRY [LARGE SCALE ANALYSIS]</scope>
    <source>
        <tissue>Brain</tissue>
        <tissue>Brown adipose tissue</tissue>
        <tissue>Heart</tissue>
        <tissue>Kidney</tissue>
        <tissue>Liver</tissue>
        <tissue>Lung</tissue>
        <tissue>Pancreas</tissue>
        <tissue>Spleen</tissue>
        <tissue>Testis</tissue>
    </source>
</reference>
<reference key="5">
    <citation type="journal article" date="2013" name="Mol. Cell">
        <title>SIRT5-mediated lysine desuccinylation impacts diverse metabolic pathways.</title>
        <authorList>
            <person name="Park J."/>
            <person name="Chen Y."/>
            <person name="Tishkoff D.X."/>
            <person name="Peng C."/>
            <person name="Tan M."/>
            <person name="Dai L."/>
            <person name="Xie Z."/>
            <person name="Zhang Y."/>
            <person name="Zwaans B.M."/>
            <person name="Skinner M.E."/>
            <person name="Lombard D.B."/>
            <person name="Zhao Y."/>
        </authorList>
    </citation>
    <scope>ACETYLATION [LARGE SCALE ANALYSIS] AT LYS-106</scope>
    <scope>IDENTIFICATION BY MASS SPECTROMETRY [LARGE SCALE ANALYSIS]</scope>
    <source>
        <tissue>Embryonic fibroblast</tissue>
    </source>
</reference>
<reference key="6">
    <citation type="journal article" date="2013" name="Proc. Natl. Acad. Sci. U.S.A.">
        <title>Label-free quantitative proteomics of the lysine acetylome in mitochondria identifies substrates of SIRT3 in metabolic pathways.</title>
        <authorList>
            <person name="Rardin M.J."/>
            <person name="Newman J.C."/>
            <person name="Held J.M."/>
            <person name="Cusack M.P."/>
            <person name="Sorensen D.J."/>
            <person name="Li B."/>
            <person name="Schilling B."/>
            <person name="Mooney S.D."/>
            <person name="Kahn C.R."/>
            <person name="Verdin E."/>
            <person name="Gibson B.W."/>
        </authorList>
    </citation>
    <scope>ACETYLATION [LARGE SCALE ANALYSIS] AT LYS-91 AND LYS-106</scope>
    <scope>IDENTIFICATION BY MASS SPECTROMETRY [LARGE SCALE ANALYSIS]</scope>
    <source>
        <tissue>Liver</tissue>
    </source>
</reference>
<accession>P53026</accession>
<sequence>MSSKVSRDTLYEAVREVLHGNQRKRRKFLETVELQISLKNYDPQKDKRFSGTVRLKSTPRPKFSVCVLGDQQHCDERKAVDIPHMDIEALKKLNKNKKLVKKLAKKYDAFLASESLIKQIPRILGPGLNKAGKFPSLLTHNENMVAKVDEVKSTIKFQMKKVLCLAVAVGHVKMTDDELVYNIHLAVNFLVSLLKKNWQNVRALYIKSTMGKPQRLY</sequence>